<keyword id="KW-0066">ATP synthesis</keyword>
<keyword id="KW-0067">ATP-binding</keyword>
<keyword id="KW-1003">Cell membrane</keyword>
<keyword id="KW-0139">CF(1)</keyword>
<keyword id="KW-0375">Hydrogen ion transport</keyword>
<keyword id="KW-0406">Ion transport</keyword>
<keyword id="KW-0472">Membrane</keyword>
<keyword id="KW-0547">Nucleotide-binding</keyword>
<keyword id="KW-1278">Translocase</keyword>
<keyword id="KW-0813">Transport</keyword>
<proteinExistence type="inferred from homology"/>
<sequence>MADNQTTAAEPTNGRVTRVQGSVIDVEFPVGHLPDIYNALKVTIVNTGAKEEGEAKETEITLEVEQHLGDSTVRCVALKPTDGLVRGASVSDTGVPISVPVGDVTKGHVFDVSGNILNKKPDETITVSERWPIHRNPPAFDQLESKTQMFETGIKVIDLLTPYVQGGKIGLFGGAGVGKTVLIQEMIQRVAQNHGGVSVFAGVGERTREGNDLIGEMAEAGVLEKTALVFGQMDEQPGTRLRVPLTALTMAEYFRDVQNQDVLLFIDNIFRFTQAGSEVSTLLGRMPSAVGYQPNLADEMGSLQERITSTRGHSITSLQAIYVPADDYTDPAPATTFAHLDATTELSRDIASKGIYPAVDPLSSTSRILDPRYVGQAHYDCANRVKAILQRNKELQDIIALIGIDELSEEDKTTVNRARKIEQFLGQNFYVAEKFTGRPGSYVPADETIEAFTRICDGVYDDVPEQAFSGIGGIDDLEEKWHNMQKELGA</sequence>
<evidence type="ECO:0000255" key="1">
    <source>
        <dbReference type="HAMAP-Rule" id="MF_01347"/>
    </source>
</evidence>
<gene>
    <name evidence="1" type="primary">atpD</name>
    <name type="ordered locus">Blon_0309</name>
    <name type="ordered locus">BLIJ_0314</name>
</gene>
<feature type="chain" id="PRO_1000166573" description="ATP synthase subunit beta">
    <location>
        <begin position="1"/>
        <end position="490"/>
    </location>
</feature>
<feature type="binding site" evidence="1">
    <location>
        <begin position="173"/>
        <end position="180"/>
    </location>
    <ligand>
        <name>ATP</name>
        <dbReference type="ChEBI" id="CHEBI:30616"/>
    </ligand>
</feature>
<organism>
    <name type="scientific">Bifidobacterium longum subsp. infantis (strain ATCC 15697 / DSM 20088 / JCM 1222 / NCTC 11817 / S12)</name>
    <dbReference type="NCBI Taxonomy" id="391904"/>
    <lineage>
        <taxon>Bacteria</taxon>
        <taxon>Bacillati</taxon>
        <taxon>Actinomycetota</taxon>
        <taxon>Actinomycetes</taxon>
        <taxon>Bifidobacteriales</taxon>
        <taxon>Bifidobacteriaceae</taxon>
        <taxon>Bifidobacterium</taxon>
    </lineage>
</organism>
<accession>B7GTZ3</accession>
<accession>E8MP84</accession>
<name>ATPB_BIFLS</name>
<comment type="function">
    <text evidence="1">Produces ATP from ADP in the presence of a proton gradient across the membrane. The catalytic sites are hosted primarily by the beta subunits.</text>
</comment>
<comment type="catalytic activity">
    <reaction evidence="1">
        <text>ATP + H2O + 4 H(+)(in) = ADP + phosphate + 5 H(+)(out)</text>
        <dbReference type="Rhea" id="RHEA:57720"/>
        <dbReference type="ChEBI" id="CHEBI:15377"/>
        <dbReference type="ChEBI" id="CHEBI:15378"/>
        <dbReference type="ChEBI" id="CHEBI:30616"/>
        <dbReference type="ChEBI" id="CHEBI:43474"/>
        <dbReference type="ChEBI" id="CHEBI:456216"/>
        <dbReference type="EC" id="7.1.2.2"/>
    </reaction>
</comment>
<comment type="subunit">
    <text evidence="1">F-type ATPases have 2 components, CF(1) - the catalytic core - and CF(0) - the membrane proton channel. CF(1) has five subunits: alpha(3), beta(3), gamma(1), delta(1), epsilon(1). CF(0) has three main subunits: a(1), b(2) and c(9-12). The alpha and beta chains form an alternating ring which encloses part of the gamma chain. CF(1) is attached to CF(0) by a central stalk formed by the gamma and epsilon chains, while a peripheral stalk is formed by the delta and b chains.</text>
</comment>
<comment type="subcellular location">
    <subcellularLocation>
        <location evidence="1">Cell membrane</location>
        <topology evidence="1">Peripheral membrane protein</topology>
    </subcellularLocation>
</comment>
<comment type="similarity">
    <text evidence="1">Belongs to the ATPase alpha/beta chains family.</text>
</comment>
<protein>
    <recommendedName>
        <fullName evidence="1">ATP synthase subunit beta</fullName>
        <ecNumber evidence="1">7.1.2.2</ecNumber>
    </recommendedName>
    <alternativeName>
        <fullName evidence="1">ATP synthase F1 sector subunit beta</fullName>
    </alternativeName>
    <alternativeName>
        <fullName evidence="1">F-ATPase subunit beta</fullName>
    </alternativeName>
</protein>
<dbReference type="EC" id="7.1.2.2" evidence="1"/>
<dbReference type="EMBL" id="CP001095">
    <property type="protein sequence ID" value="ACJ51434.1"/>
    <property type="molecule type" value="Genomic_DNA"/>
</dbReference>
<dbReference type="EMBL" id="AP010889">
    <property type="protein sequence ID" value="BAJ67908.1"/>
    <property type="molecule type" value="Genomic_DNA"/>
</dbReference>
<dbReference type="RefSeq" id="WP_012576744.1">
    <property type="nucleotide sequence ID" value="NZ_JDTT01000024.1"/>
</dbReference>
<dbReference type="SMR" id="B7GTZ3"/>
<dbReference type="KEGG" id="bln:Blon_0309"/>
<dbReference type="KEGG" id="blon:BLIJ_0314"/>
<dbReference type="PATRIC" id="fig|391904.8.peg.317"/>
<dbReference type="HOGENOM" id="CLU_022398_0_2_11"/>
<dbReference type="Proteomes" id="UP000001360">
    <property type="component" value="Chromosome"/>
</dbReference>
<dbReference type="GO" id="GO:0005886">
    <property type="term" value="C:plasma membrane"/>
    <property type="evidence" value="ECO:0007669"/>
    <property type="project" value="UniProtKB-SubCell"/>
</dbReference>
<dbReference type="GO" id="GO:0045259">
    <property type="term" value="C:proton-transporting ATP synthase complex"/>
    <property type="evidence" value="ECO:0007669"/>
    <property type="project" value="UniProtKB-KW"/>
</dbReference>
<dbReference type="GO" id="GO:0005524">
    <property type="term" value="F:ATP binding"/>
    <property type="evidence" value="ECO:0007669"/>
    <property type="project" value="UniProtKB-UniRule"/>
</dbReference>
<dbReference type="GO" id="GO:0016887">
    <property type="term" value="F:ATP hydrolysis activity"/>
    <property type="evidence" value="ECO:0007669"/>
    <property type="project" value="InterPro"/>
</dbReference>
<dbReference type="GO" id="GO:0046933">
    <property type="term" value="F:proton-transporting ATP synthase activity, rotational mechanism"/>
    <property type="evidence" value="ECO:0007669"/>
    <property type="project" value="UniProtKB-UniRule"/>
</dbReference>
<dbReference type="CDD" id="cd18110">
    <property type="entry name" value="ATP-synt_F1_beta_C"/>
    <property type="match status" value="1"/>
</dbReference>
<dbReference type="CDD" id="cd18115">
    <property type="entry name" value="ATP-synt_F1_beta_N"/>
    <property type="match status" value="1"/>
</dbReference>
<dbReference type="CDD" id="cd01133">
    <property type="entry name" value="F1-ATPase_beta_CD"/>
    <property type="match status" value="1"/>
</dbReference>
<dbReference type="FunFam" id="1.10.1140.10:FF:000005">
    <property type="entry name" value="ATP synthase subunit beta"/>
    <property type="match status" value="1"/>
</dbReference>
<dbReference type="FunFam" id="2.40.10.170:FF:000005">
    <property type="entry name" value="ATP synthase subunit beta"/>
    <property type="match status" value="1"/>
</dbReference>
<dbReference type="FunFam" id="3.40.50.300:FF:000004">
    <property type="entry name" value="ATP synthase subunit beta"/>
    <property type="match status" value="1"/>
</dbReference>
<dbReference type="Gene3D" id="2.40.10.170">
    <property type="match status" value="1"/>
</dbReference>
<dbReference type="Gene3D" id="1.10.1140.10">
    <property type="entry name" value="Bovine Mitochondrial F1-atpase, Atp Synthase Beta Chain, Chain D, domain 3"/>
    <property type="match status" value="1"/>
</dbReference>
<dbReference type="Gene3D" id="3.40.50.300">
    <property type="entry name" value="P-loop containing nucleotide triphosphate hydrolases"/>
    <property type="match status" value="1"/>
</dbReference>
<dbReference type="HAMAP" id="MF_01347">
    <property type="entry name" value="ATP_synth_beta_bact"/>
    <property type="match status" value="1"/>
</dbReference>
<dbReference type="InterPro" id="IPR003593">
    <property type="entry name" value="AAA+_ATPase"/>
</dbReference>
<dbReference type="InterPro" id="IPR055190">
    <property type="entry name" value="ATP-synt_VA_C"/>
</dbReference>
<dbReference type="InterPro" id="IPR005722">
    <property type="entry name" value="ATP_synth_F1_bsu"/>
</dbReference>
<dbReference type="InterPro" id="IPR050053">
    <property type="entry name" value="ATPase_alpha/beta_chains"/>
</dbReference>
<dbReference type="InterPro" id="IPR004100">
    <property type="entry name" value="ATPase_F1/V1/A1_a/bsu_N"/>
</dbReference>
<dbReference type="InterPro" id="IPR036121">
    <property type="entry name" value="ATPase_F1/V1/A1_a/bsu_N_sf"/>
</dbReference>
<dbReference type="InterPro" id="IPR000194">
    <property type="entry name" value="ATPase_F1/V1/A1_a/bsu_nucl-bd"/>
</dbReference>
<dbReference type="InterPro" id="IPR024034">
    <property type="entry name" value="ATPase_F1/V1_b/a_C"/>
</dbReference>
<dbReference type="InterPro" id="IPR027417">
    <property type="entry name" value="P-loop_NTPase"/>
</dbReference>
<dbReference type="NCBIfam" id="TIGR01039">
    <property type="entry name" value="atpD"/>
    <property type="match status" value="1"/>
</dbReference>
<dbReference type="PANTHER" id="PTHR15184">
    <property type="entry name" value="ATP SYNTHASE"/>
    <property type="match status" value="1"/>
</dbReference>
<dbReference type="PANTHER" id="PTHR15184:SF71">
    <property type="entry name" value="ATP SYNTHASE SUBUNIT BETA, MITOCHONDRIAL"/>
    <property type="match status" value="1"/>
</dbReference>
<dbReference type="Pfam" id="PF00006">
    <property type="entry name" value="ATP-synt_ab"/>
    <property type="match status" value="1"/>
</dbReference>
<dbReference type="Pfam" id="PF02874">
    <property type="entry name" value="ATP-synt_ab_N"/>
    <property type="match status" value="1"/>
</dbReference>
<dbReference type="Pfam" id="PF22919">
    <property type="entry name" value="ATP-synt_VA_C"/>
    <property type="match status" value="1"/>
</dbReference>
<dbReference type="SMART" id="SM00382">
    <property type="entry name" value="AAA"/>
    <property type="match status" value="1"/>
</dbReference>
<dbReference type="SUPFAM" id="SSF47917">
    <property type="entry name" value="C-terminal domain of alpha and beta subunits of F1 ATP synthase"/>
    <property type="match status" value="1"/>
</dbReference>
<dbReference type="SUPFAM" id="SSF50615">
    <property type="entry name" value="N-terminal domain of alpha and beta subunits of F1 ATP synthase"/>
    <property type="match status" value="1"/>
</dbReference>
<dbReference type="SUPFAM" id="SSF52540">
    <property type="entry name" value="P-loop containing nucleoside triphosphate hydrolases"/>
    <property type="match status" value="1"/>
</dbReference>
<reference key="1">
    <citation type="journal article" date="2008" name="Proc. Natl. Acad. Sci. U.S.A.">
        <title>The genome sequence of Bifidobacterium longum subsp. infantis reveals adaptations for milk utilization within the infant microbiome.</title>
        <authorList>
            <person name="Sela D.A."/>
            <person name="Chapman J."/>
            <person name="Adeuya A."/>
            <person name="Kim J.H."/>
            <person name="Chen F."/>
            <person name="Whitehead T.R."/>
            <person name="Lapidus A."/>
            <person name="Rokhsar D.S."/>
            <person name="Lebrilla C.B."/>
            <person name="German J.B."/>
            <person name="Price N.P."/>
            <person name="Richardson P.M."/>
            <person name="Mills D.A."/>
        </authorList>
    </citation>
    <scope>NUCLEOTIDE SEQUENCE [LARGE SCALE GENOMIC DNA]</scope>
    <source>
        <strain>ATCC 15697 / DSM 20088 / JCM 1222 / NCTC 11817 / S12</strain>
    </source>
</reference>
<reference key="2">
    <citation type="journal article" date="2011" name="Nature">
        <title>Bifidobacteria can protect from enteropathogenic infection through production of acetate.</title>
        <authorList>
            <person name="Fukuda S."/>
            <person name="Toh H."/>
            <person name="Hase K."/>
            <person name="Oshima K."/>
            <person name="Nakanishi Y."/>
            <person name="Yoshimura K."/>
            <person name="Tobe T."/>
            <person name="Clarke J.M."/>
            <person name="Topping D.L."/>
            <person name="Suzuki T."/>
            <person name="Taylor T.D."/>
            <person name="Itoh K."/>
            <person name="Kikuchi J."/>
            <person name="Morita H."/>
            <person name="Hattori M."/>
            <person name="Ohno H."/>
        </authorList>
    </citation>
    <scope>NUCLEOTIDE SEQUENCE [LARGE SCALE GENOMIC DNA]</scope>
    <source>
        <strain>ATCC 15697 / DSM 20088 / JCM 1222 / NCTC 11817 / S12</strain>
    </source>
</reference>